<protein>
    <recommendedName>
        <fullName evidence="1">Bifunctional uridylyltransferase/uridylyl-removing enzyme</fullName>
        <shortName evidence="1">UTase/UR</shortName>
    </recommendedName>
    <alternativeName>
        <fullName evidence="1">Bifunctional [protein-PII] modification enzyme</fullName>
    </alternativeName>
    <alternativeName>
        <fullName evidence="1">Bifunctional nitrogen sensor protein</fullName>
    </alternativeName>
    <domain>
        <recommendedName>
            <fullName evidence="1">[Protein-PII] uridylyltransferase</fullName>
            <shortName evidence="1">PII uridylyltransferase</shortName>
            <shortName evidence="1">UTase</shortName>
            <ecNumber evidence="1">2.7.7.59</ecNumber>
        </recommendedName>
    </domain>
    <domain>
        <recommendedName>
            <fullName evidence="1">[Protein-PII]-UMP uridylyl-removing enzyme</fullName>
            <shortName evidence="1">UR</shortName>
            <ecNumber evidence="1">3.1.4.-</ecNumber>
        </recommendedName>
    </domain>
</protein>
<name>GLND_BRUO2</name>
<gene>
    <name evidence="1" type="primary">glnD</name>
    <name type="ordered locus">BOV_0139</name>
</gene>
<organism>
    <name type="scientific">Brucella ovis (strain ATCC 25840 / 63/290 / NCTC 10512)</name>
    <dbReference type="NCBI Taxonomy" id="444178"/>
    <lineage>
        <taxon>Bacteria</taxon>
        <taxon>Pseudomonadati</taxon>
        <taxon>Pseudomonadota</taxon>
        <taxon>Alphaproteobacteria</taxon>
        <taxon>Hyphomicrobiales</taxon>
        <taxon>Brucellaceae</taxon>
        <taxon>Brucella/Ochrobactrum group</taxon>
        <taxon>Brucella</taxon>
    </lineage>
</organism>
<feature type="chain" id="PRO_1000022329" description="Bifunctional uridylyltransferase/uridylyl-removing enzyme">
    <location>
        <begin position="1"/>
        <end position="934"/>
    </location>
</feature>
<feature type="domain" description="HD" evidence="2">
    <location>
        <begin position="496"/>
        <end position="613"/>
    </location>
</feature>
<feature type="domain" description="ACT 1" evidence="1">
    <location>
        <begin position="737"/>
        <end position="818"/>
    </location>
</feature>
<feature type="domain" description="ACT 2" evidence="1">
    <location>
        <begin position="848"/>
        <end position="931"/>
    </location>
</feature>
<feature type="region of interest" description="Uridylyltransferase">
    <location>
        <begin position="1"/>
        <end position="379"/>
    </location>
</feature>
<feature type="region of interest" description="Uridylyl-removing">
    <location>
        <begin position="380"/>
        <end position="736"/>
    </location>
</feature>
<comment type="function">
    <text evidence="1">Modifies, by uridylylation and deuridylylation, the PII regulatory proteins (GlnB and homologs), in response to the nitrogen status of the cell that GlnD senses through the glutamine level. Under low glutamine levels, catalyzes the conversion of the PII proteins and UTP to PII-UMP and PPi, while under higher glutamine levels, GlnD hydrolyzes PII-UMP to PII and UMP (deuridylylation). Thus, controls uridylylation state and activity of the PII proteins, and plays an important role in the regulation of nitrogen assimilation and metabolism.</text>
</comment>
<comment type="catalytic activity">
    <reaction evidence="1">
        <text>[protein-PII]-L-tyrosine + UTP = [protein-PII]-uridylyl-L-tyrosine + diphosphate</text>
        <dbReference type="Rhea" id="RHEA:13673"/>
        <dbReference type="Rhea" id="RHEA-COMP:12147"/>
        <dbReference type="Rhea" id="RHEA-COMP:12148"/>
        <dbReference type="ChEBI" id="CHEBI:33019"/>
        <dbReference type="ChEBI" id="CHEBI:46398"/>
        <dbReference type="ChEBI" id="CHEBI:46858"/>
        <dbReference type="ChEBI" id="CHEBI:90602"/>
        <dbReference type="EC" id="2.7.7.59"/>
    </reaction>
</comment>
<comment type="catalytic activity">
    <reaction evidence="1">
        <text>[protein-PII]-uridylyl-L-tyrosine + H2O = [protein-PII]-L-tyrosine + UMP + H(+)</text>
        <dbReference type="Rhea" id="RHEA:48600"/>
        <dbReference type="Rhea" id="RHEA-COMP:12147"/>
        <dbReference type="Rhea" id="RHEA-COMP:12148"/>
        <dbReference type="ChEBI" id="CHEBI:15377"/>
        <dbReference type="ChEBI" id="CHEBI:15378"/>
        <dbReference type="ChEBI" id="CHEBI:46858"/>
        <dbReference type="ChEBI" id="CHEBI:57865"/>
        <dbReference type="ChEBI" id="CHEBI:90602"/>
    </reaction>
</comment>
<comment type="cofactor">
    <cofactor evidence="1">
        <name>Mg(2+)</name>
        <dbReference type="ChEBI" id="CHEBI:18420"/>
    </cofactor>
</comment>
<comment type="activity regulation">
    <text evidence="1">Uridylyltransferase (UTase) activity is inhibited by glutamine, while glutamine activates uridylyl-removing (UR) activity.</text>
</comment>
<comment type="domain">
    <text evidence="1">Has four distinct domains: an N-terminal nucleotidyltransferase (NT) domain responsible for UTase activity, a central HD domain that encodes UR activity, and two C-terminal ACT domains that seem to have a role in glutamine sensing.</text>
</comment>
<comment type="similarity">
    <text evidence="1">Belongs to the GlnD family.</text>
</comment>
<evidence type="ECO:0000255" key="1">
    <source>
        <dbReference type="HAMAP-Rule" id="MF_00277"/>
    </source>
</evidence>
<evidence type="ECO:0000255" key="2">
    <source>
        <dbReference type="PROSITE-ProRule" id="PRU01175"/>
    </source>
</evidence>
<accession>A5VN81</accession>
<keyword id="KW-0378">Hydrolase</keyword>
<keyword id="KW-0460">Magnesium</keyword>
<keyword id="KW-0511">Multifunctional enzyme</keyword>
<keyword id="KW-0548">Nucleotidyltransferase</keyword>
<keyword id="KW-0677">Repeat</keyword>
<keyword id="KW-0808">Transferase</keyword>
<dbReference type="EC" id="2.7.7.59" evidence="1"/>
<dbReference type="EC" id="3.1.4.-" evidence="1"/>
<dbReference type="EMBL" id="CP000708">
    <property type="protein sequence ID" value="ABQ61661.1"/>
    <property type="molecule type" value="Genomic_DNA"/>
</dbReference>
<dbReference type="RefSeq" id="WP_005977762.1">
    <property type="nucleotide sequence ID" value="NC_009505.1"/>
</dbReference>
<dbReference type="SMR" id="A5VN81"/>
<dbReference type="GeneID" id="45123634"/>
<dbReference type="KEGG" id="bov:BOV_0139"/>
<dbReference type="HOGENOM" id="CLU_012833_1_0_5"/>
<dbReference type="PhylomeDB" id="A5VN81"/>
<dbReference type="PRO" id="PR:A5VN81"/>
<dbReference type="Proteomes" id="UP000006383">
    <property type="component" value="Chromosome I"/>
</dbReference>
<dbReference type="GO" id="GO:0008773">
    <property type="term" value="F:[protein-PII] uridylyltransferase activity"/>
    <property type="evidence" value="ECO:0007669"/>
    <property type="project" value="UniProtKB-UniRule"/>
</dbReference>
<dbReference type="GO" id="GO:0008081">
    <property type="term" value="F:phosphoric diester hydrolase activity"/>
    <property type="evidence" value="ECO:0007669"/>
    <property type="project" value="UniProtKB-UniRule"/>
</dbReference>
<dbReference type="GO" id="GO:0006808">
    <property type="term" value="P:regulation of nitrogen utilization"/>
    <property type="evidence" value="ECO:0007669"/>
    <property type="project" value="UniProtKB-UniRule"/>
</dbReference>
<dbReference type="CDD" id="cd04899">
    <property type="entry name" value="ACT_ACR-UUR-like_2"/>
    <property type="match status" value="1"/>
</dbReference>
<dbReference type="CDD" id="cd04900">
    <property type="entry name" value="ACT_UUR-like_1"/>
    <property type="match status" value="1"/>
</dbReference>
<dbReference type="CDD" id="cd00077">
    <property type="entry name" value="HDc"/>
    <property type="match status" value="1"/>
</dbReference>
<dbReference type="CDD" id="cd05401">
    <property type="entry name" value="NT_GlnE_GlnD_like"/>
    <property type="match status" value="1"/>
</dbReference>
<dbReference type="Gene3D" id="3.30.70.260">
    <property type="match status" value="1"/>
</dbReference>
<dbReference type="Gene3D" id="3.30.460.10">
    <property type="entry name" value="Beta Polymerase, domain 2"/>
    <property type="match status" value="1"/>
</dbReference>
<dbReference type="Gene3D" id="1.10.3090.10">
    <property type="entry name" value="cca-adding enzyme, domain 2"/>
    <property type="match status" value="1"/>
</dbReference>
<dbReference type="HAMAP" id="MF_00277">
    <property type="entry name" value="PII_uridylyl_transf"/>
    <property type="match status" value="1"/>
</dbReference>
<dbReference type="InterPro" id="IPR045865">
    <property type="entry name" value="ACT-like_dom_sf"/>
</dbReference>
<dbReference type="InterPro" id="IPR002912">
    <property type="entry name" value="ACT_dom"/>
</dbReference>
<dbReference type="InterPro" id="IPR003607">
    <property type="entry name" value="HD/PDEase_dom"/>
</dbReference>
<dbReference type="InterPro" id="IPR006674">
    <property type="entry name" value="HD_domain"/>
</dbReference>
<dbReference type="InterPro" id="IPR043519">
    <property type="entry name" value="NT_sf"/>
</dbReference>
<dbReference type="InterPro" id="IPR013546">
    <property type="entry name" value="PII_UdlTrfase/GS_AdlTrfase"/>
</dbReference>
<dbReference type="InterPro" id="IPR010043">
    <property type="entry name" value="UTase/UR"/>
</dbReference>
<dbReference type="NCBIfam" id="NF003467">
    <property type="entry name" value="PRK05092.1"/>
    <property type="match status" value="1"/>
</dbReference>
<dbReference type="NCBIfam" id="TIGR01693">
    <property type="entry name" value="UTase_glnD"/>
    <property type="match status" value="1"/>
</dbReference>
<dbReference type="PANTHER" id="PTHR47320">
    <property type="entry name" value="BIFUNCTIONAL URIDYLYLTRANSFERASE/URIDYLYL-REMOVING ENZYME"/>
    <property type="match status" value="1"/>
</dbReference>
<dbReference type="PANTHER" id="PTHR47320:SF1">
    <property type="entry name" value="BIFUNCTIONAL URIDYLYLTRANSFERASE_URIDYLYL-REMOVING ENZYME"/>
    <property type="match status" value="1"/>
</dbReference>
<dbReference type="Pfam" id="PF01842">
    <property type="entry name" value="ACT"/>
    <property type="match status" value="2"/>
</dbReference>
<dbReference type="Pfam" id="PF08335">
    <property type="entry name" value="GlnD_UR_UTase"/>
    <property type="match status" value="1"/>
</dbReference>
<dbReference type="Pfam" id="PF01966">
    <property type="entry name" value="HD"/>
    <property type="match status" value="1"/>
</dbReference>
<dbReference type="PIRSF" id="PIRSF006288">
    <property type="entry name" value="PII_uridyltransf"/>
    <property type="match status" value="1"/>
</dbReference>
<dbReference type="SMART" id="SM00471">
    <property type="entry name" value="HDc"/>
    <property type="match status" value="1"/>
</dbReference>
<dbReference type="SUPFAM" id="SSF55021">
    <property type="entry name" value="ACT-like"/>
    <property type="match status" value="2"/>
</dbReference>
<dbReference type="SUPFAM" id="SSF81301">
    <property type="entry name" value="Nucleotidyltransferase"/>
    <property type="match status" value="1"/>
</dbReference>
<dbReference type="SUPFAM" id="SSF81593">
    <property type="entry name" value="Nucleotidyltransferase substrate binding subunit/domain"/>
    <property type="match status" value="1"/>
</dbReference>
<dbReference type="SUPFAM" id="SSF81891">
    <property type="entry name" value="Poly A polymerase C-terminal region-like"/>
    <property type="match status" value="1"/>
</dbReference>
<dbReference type="PROSITE" id="PS51671">
    <property type="entry name" value="ACT"/>
    <property type="match status" value="2"/>
</dbReference>
<dbReference type="PROSITE" id="PS51831">
    <property type="entry name" value="HD"/>
    <property type="match status" value="1"/>
</dbReference>
<sequence>MSAHDLKLEEIVNAETLRRKLNELADTADESYTSLPMRKVVLQTLKDALASGRANAEDMLMKDGGGTLCAKRLCYLMDTLIDILFEFATTRAYPTRNPSKAENMALVAVGGYGRGGLAQGSDIDLLFLLPYKQTPWGEQVVEYTLYMLWDMGLKVGHSTRNIDECIRLAREDMTIRTALLDARFLTGDKDLFRTLEIRFEEEIVKGTEPEFIQAKLAERDARHRKAGETRYLVEPNVKEGKGGQRDLHTLFWITKYFYRVKTKEELVKLGVLSRAELKLFNKAEDFLWAVRCHMHFATLKAEERLSFDIQPEIAQRLGYTAHPGQNYVERFIKHYFLVAKDVGDLTRIICAALEEQQAKHVPGFNRIFLTFSRRKRKLSDDGAFISENHRINIARPDIFRQDPVNMIRLFHLADRHGLEFHPEAMQSLTRSLKLINADLRENPEANRLFLEILTSPRNPELILRRMNESGVLGKFIPDFGKIVAMMQFNMYHHYTVDEHLLRCIAVLSEIEHGELKTEHPLSNHLITTIKRDRNLLYVTLLLHDIAKGRPEDHSIAGARIARRLCPRFGLTPSETETVEWLVREHLTMSMVAQSRDLNDRKTIIDFADTVQTMERLKLLLILTVCDIKAVGPGIWNGWKGQLLRTLFYETELVLTGGFSELSRAARDKQAREALAERLSDWPKEERDAYLALPYTNYFLTVSLDDQVRHAHFIRDADQQGRALVTMAKPHAFEAVTEITVLAPDHPRLLSVITGACAAAGGNIVDAQIFTTSDGRALDTILISREFDTDDDERRQAERVGKVIEDVLSGKAHLPDMLAKRTKPKKAARAFKVEPRVEINNTLSNKFTVIEVEGLDRPGLLSELTGLISDLSLDIASAHITTFGEKVIDSFYVTDLVGHKISNATRQGNIKRKLLALLGAENGARTNGRSPQAAA</sequence>
<reference key="1">
    <citation type="journal article" date="2009" name="PLoS ONE">
        <title>Genome degradation in Brucella ovis corresponds with narrowing of its host range and tissue tropism.</title>
        <authorList>
            <person name="Tsolis R.M."/>
            <person name="Seshadri R."/>
            <person name="Santos R.L."/>
            <person name="Sangari F.J."/>
            <person name="Lobo J.M."/>
            <person name="de Jong M.F."/>
            <person name="Ren Q."/>
            <person name="Myers G."/>
            <person name="Brinkac L.M."/>
            <person name="Nelson W.C."/>
            <person name="Deboy R.T."/>
            <person name="Angiuoli S."/>
            <person name="Khouri H."/>
            <person name="Dimitrov G."/>
            <person name="Robinson J.R."/>
            <person name="Mulligan S."/>
            <person name="Walker R.L."/>
            <person name="Elzer P.E."/>
            <person name="Hassan K.A."/>
            <person name="Paulsen I.T."/>
        </authorList>
    </citation>
    <scope>NUCLEOTIDE SEQUENCE [LARGE SCALE GENOMIC DNA]</scope>
    <source>
        <strain>ATCC 25840 / 63/290 / NCTC 10512</strain>
    </source>
</reference>
<proteinExistence type="inferred from homology"/>